<feature type="signal peptide" evidence="1">
    <location>
        <begin position="1"/>
        <end position="27"/>
    </location>
</feature>
<feature type="propeptide" id="PRO_0000458795" evidence="5">
    <location>
        <begin position="28"/>
        <end position="45"/>
    </location>
</feature>
<feature type="peptide" id="PRO_0000458796" description="Mastoparan-VT7" evidence="2">
    <location>
        <begin position="46"/>
        <end position="58"/>
    </location>
</feature>
<feature type="repeat" description="AXPX 1" evidence="4">
    <location>
        <begin position="27"/>
        <end position="30"/>
    </location>
</feature>
<feature type="repeat" description="AXPX 2" evidence="4">
    <location>
        <begin position="31"/>
        <end position="34"/>
    </location>
</feature>
<feature type="repeat" description="AXPX 3" evidence="4">
    <location>
        <begin position="35"/>
        <end position="38"/>
    </location>
</feature>
<feature type="repeat" description="AXPX 4" evidence="4">
    <location>
        <begin position="41"/>
        <end position="44"/>
    </location>
</feature>
<sequence length="58" mass="6089">MKNTILILFTAFIALLGFFGMSAEALADPKADPLAGPNPDADPEAINLKAIAALARNY</sequence>
<proteinExistence type="inferred from homology"/>
<organism>
    <name type="scientific">Vespa tropica</name>
    <name type="common">Greater banded hornet</name>
    <name type="synonym">Sphex tropica</name>
    <dbReference type="NCBI Taxonomy" id="7450"/>
    <lineage>
        <taxon>Eukaryota</taxon>
        <taxon>Metazoa</taxon>
        <taxon>Ecdysozoa</taxon>
        <taxon>Arthropoda</taxon>
        <taxon>Hexapoda</taxon>
        <taxon>Insecta</taxon>
        <taxon>Pterygota</taxon>
        <taxon>Neoptera</taxon>
        <taxon>Endopterygota</taxon>
        <taxon>Hymenoptera</taxon>
        <taxon>Apocrita</taxon>
        <taxon>Aculeata</taxon>
        <taxon>Vespoidea</taxon>
        <taxon>Vespidae</taxon>
        <taxon>Vespinae</taxon>
        <taxon>Vespa</taxon>
    </lineage>
</organism>
<accession>P0DQZ9</accession>
<reference key="1">
    <citation type="journal article" date="2013" name="Toxicon">
        <title>Antimicrobial peptides from the venom gland of the social wasp Vespa tropica.</title>
        <authorList>
            <person name="Yang X."/>
            <person name="Wang Y."/>
            <person name="Lee W.H."/>
            <person name="Zhang Y."/>
        </authorList>
    </citation>
    <scope>NUCLEOTIDE SEQUENCE [MRNA]</scope>
    <scope>FUNCTION</scope>
    <scope>SYNTHESIS OF 46-59</scope>
    <source>
        <tissue>Venom gland</tissue>
    </source>
</reference>
<comment type="function">
    <text evidence="2">The synthetic peptide shows antimicrobial activities against Gram-negative bacteria (but not against all strains tested), Gram-positive bacteria (all strains tested) and the fungi C.albicans (but not C.parapsilosis). Exhibits little hemolytic activity against washed human erythrocytes.</text>
</comment>
<comment type="subcellular location">
    <subcellularLocation>
        <location evidence="5">Secreted</location>
    </subcellularLocation>
</comment>
<comment type="tissue specificity">
    <text evidence="5">Expressed by the venom gland.</text>
</comment>
<comment type="similarity">
    <text evidence="4">Belongs to the MCD family. Mastoparan subfamily.</text>
</comment>
<keyword id="KW-0044">Antibiotic</keyword>
<keyword id="KW-0929">Antimicrobial</keyword>
<keyword id="KW-0295">Fungicide</keyword>
<keyword id="KW-0391">Immunity</keyword>
<keyword id="KW-0399">Innate immunity</keyword>
<keyword id="KW-0677">Repeat</keyword>
<keyword id="KW-0964">Secreted</keyword>
<keyword id="KW-0732">Signal</keyword>
<dbReference type="GO" id="GO:0005576">
    <property type="term" value="C:extracellular region"/>
    <property type="evidence" value="ECO:0007669"/>
    <property type="project" value="UniProtKB-SubCell"/>
</dbReference>
<dbReference type="GO" id="GO:0042742">
    <property type="term" value="P:defense response to bacterium"/>
    <property type="evidence" value="ECO:0007669"/>
    <property type="project" value="UniProtKB-KW"/>
</dbReference>
<dbReference type="GO" id="GO:0050832">
    <property type="term" value="P:defense response to fungus"/>
    <property type="evidence" value="ECO:0007669"/>
    <property type="project" value="UniProtKB-KW"/>
</dbReference>
<dbReference type="GO" id="GO:0045087">
    <property type="term" value="P:innate immune response"/>
    <property type="evidence" value="ECO:0007669"/>
    <property type="project" value="UniProtKB-KW"/>
</dbReference>
<dbReference type="GO" id="GO:0031640">
    <property type="term" value="P:killing of cells of another organism"/>
    <property type="evidence" value="ECO:0007669"/>
    <property type="project" value="UniProtKB-KW"/>
</dbReference>
<protein>
    <recommendedName>
        <fullName evidence="3">Mastoparan-VT7</fullName>
    </recommendedName>
</protein>
<evidence type="ECO:0000255" key="1"/>
<evidence type="ECO:0000269" key="2">
    <source>
    </source>
</evidence>
<evidence type="ECO:0000303" key="3">
    <source>
    </source>
</evidence>
<evidence type="ECO:0000305" key="4"/>
<evidence type="ECO:0000305" key="5">
    <source>
    </source>
</evidence>
<name>MAST7_VESTR</name>